<keyword id="KW-1003">Cell membrane</keyword>
<keyword id="KW-0963">Cytoplasm</keyword>
<keyword id="KW-0225">Disease variant</keyword>
<keyword id="KW-0325">Glycoprotein</keyword>
<keyword id="KW-0333">Golgi apparatus</keyword>
<keyword id="KW-0472">Membrane</keyword>
<keyword id="KW-0539">Nucleus</keyword>
<keyword id="KW-1267">Proteomics identification</keyword>
<keyword id="KW-1185">Reference proteome</keyword>
<keyword id="KW-0812">Transmembrane</keyword>
<keyword id="KW-1133">Transmembrane helix</keyword>
<dbReference type="EMBL" id="U52100">
    <property type="protein sequence ID" value="AAC51779.1"/>
    <property type="molecule type" value="mRNA"/>
</dbReference>
<dbReference type="EMBL" id="X94770">
    <property type="protein sequence ID" value="CAA64393.1"/>
    <property type="molecule type" value="mRNA"/>
</dbReference>
<dbReference type="EMBL" id="AY057060">
    <property type="protein sequence ID" value="AAL27085.1"/>
    <property type="molecule type" value="Genomic_DNA"/>
</dbReference>
<dbReference type="EMBL" id="AK313134">
    <property type="protein sequence ID" value="BAG35953.1"/>
    <property type="molecule type" value="mRNA"/>
</dbReference>
<dbReference type="EMBL" id="CH471112">
    <property type="protein sequence ID" value="EAW85180.1"/>
    <property type="molecule type" value="Genomic_DNA"/>
</dbReference>
<dbReference type="EMBL" id="CH471112">
    <property type="protein sequence ID" value="EAW85181.1"/>
    <property type="molecule type" value="Genomic_DNA"/>
</dbReference>
<dbReference type="EMBL" id="CH471112">
    <property type="protein sequence ID" value="EAW85182.1"/>
    <property type="molecule type" value="Genomic_DNA"/>
</dbReference>
<dbReference type="EMBL" id="BC009687">
    <property type="protein sequence ID" value="AAH09687.1"/>
    <property type="molecule type" value="mRNA"/>
</dbReference>
<dbReference type="CCDS" id="CCDS10541.1"/>
<dbReference type="PIR" id="JC5044">
    <property type="entry name" value="JC5044"/>
</dbReference>
<dbReference type="PIR" id="JC5732">
    <property type="entry name" value="JC5732"/>
</dbReference>
<dbReference type="RefSeq" id="NP_001415.1">
    <property type="nucleotide sequence ID" value="NM_001424.6"/>
</dbReference>
<dbReference type="RefSeq" id="XP_006720927.1">
    <property type="nucleotide sequence ID" value="XM_006720864.3"/>
</dbReference>
<dbReference type="SMR" id="P54851"/>
<dbReference type="BioGRID" id="108328">
    <property type="interactions" value="5"/>
</dbReference>
<dbReference type="FunCoup" id="P54851">
    <property type="interactions" value="486"/>
</dbReference>
<dbReference type="IntAct" id="P54851">
    <property type="interactions" value="2"/>
</dbReference>
<dbReference type="STRING" id="9606.ENSP00000352540"/>
<dbReference type="GlyCosmos" id="P54851">
    <property type="glycosylation" value="3 sites, No reported glycans"/>
</dbReference>
<dbReference type="GlyGen" id="P54851">
    <property type="glycosylation" value="3 sites"/>
</dbReference>
<dbReference type="iPTMnet" id="P54851"/>
<dbReference type="PhosphoSitePlus" id="P54851"/>
<dbReference type="BioMuta" id="EMP2"/>
<dbReference type="DMDM" id="1706643"/>
<dbReference type="jPOST" id="P54851"/>
<dbReference type="MassIVE" id="P54851"/>
<dbReference type="PaxDb" id="9606-ENSP00000352540"/>
<dbReference type="PeptideAtlas" id="P54851"/>
<dbReference type="ProteomicsDB" id="56740"/>
<dbReference type="Antibodypedia" id="11432">
    <property type="antibodies" value="143 antibodies from 25 providers"/>
</dbReference>
<dbReference type="DNASU" id="2013"/>
<dbReference type="Ensembl" id="ENST00000359543.8">
    <property type="protein sequence ID" value="ENSP00000352540.3"/>
    <property type="gene ID" value="ENSG00000213853.10"/>
</dbReference>
<dbReference type="Ensembl" id="ENST00000536829.1">
    <property type="protein sequence ID" value="ENSP00000445712.1"/>
    <property type="gene ID" value="ENSG00000213853.10"/>
</dbReference>
<dbReference type="GeneID" id="2013"/>
<dbReference type="KEGG" id="hsa:2013"/>
<dbReference type="MANE-Select" id="ENST00000359543.8">
    <property type="protein sequence ID" value="ENSP00000352540.3"/>
    <property type="RefSeq nucleotide sequence ID" value="NM_001424.6"/>
    <property type="RefSeq protein sequence ID" value="NP_001415.1"/>
</dbReference>
<dbReference type="UCSC" id="uc002czx.4">
    <property type="organism name" value="human"/>
</dbReference>
<dbReference type="AGR" id="HGNC:3334"/>
<dbReference type="CTD" id="2013"/>
<dbReference type="DisGeNET" id="2013"/>
<dbReference type="GeneCards" id="EMP2"/>
<dbReference type="HGNC" id="HGNC:3334">
    <property type="gene designation" value="EMP2"/>
</dbReference>
<dbReference type="HPA" id="ENSG00000213853">
    <property type="expression patterns" value="Tissue enhanced (lung)"/>
</dbReference>
<dbReference type="MalaCards" id="EMP2"/>
<dbReference type="MIM" id="602334">
    <property type="type" value="gene"/>
</dbReference>
<dbReference type="MIM" id="615861">
    <property type="type" value="phenotype"/>
</dbReference>
<dbReference type="neXtProt" id="NX_P54851"/>
<dbReference type="OpenTargets" id="ENSG00000213853"/>
<dbReference type="Orphanet" id="656">
    <property type="disease" value="Hereditary steroid-resistant nephrotic syndrome"/>
</dbReference>
<dbReference type="PharmGKB" id="PA27771"/>
<dbReference type="VEuPathDB" id="HostDB:ENSG00000213853"/>
<dbReference type="eggNOG" id="ENOG502RYYE">
    <property type="taxonomic scope" value="Eukaryota"/>
</dbReference>
<dbReference type="GeneTree" id="ENSGT00950000182696"/>
<dbReference type="HOGENOM" id="CLU_138632_0_0_1"/>
<dbReference type="InParanoid" id="P54851"/>
<dbReference type="OMA" id="VAWVSFP"/>
<dbReference type="OrthoDB" id="9939098at2759"/>
<dbReference type="PAN-GO" id="P54851">
    <property type="GO annotations" value="6 GO annotations based on evolutionary models"/>
</dbReference>
<dbReference type="PhylomeDB" id="P54851"/>
<dbReference type="TreeFam" id="TF330414"/>
<dbReference type="PathwayCommons" id="P54851"/>
<dbReference type="SignaLink" id="P54851"/>
<dbReference type="BioGRID-ORCS" id="2013">
    <property type="hits" value="14 hits in 1072 CRISPR screens"/>
</dbReference>
<dbReference type="ChiTaRS" id="EMP2">
    <property type="organism name" value="human"/>
</dbReference>
<dbReference type="GeneWiki" id="EMP2"/>
<dbReference type="GenomeRNAi" id="2013"/>
<dbReference type="Pharos" id="P54851">
    <property type="development level" value="Tbio"/>
</dbReference>
<dbReference type="PRO" id="PR:P54851"/>
<dbReference type="Proteomes" id="UP000005640">
    <property type="component" value="Chromosome 16"/>
</dbReference>
<dbReference type="RNAct" id="P54851">
    <property type="molecule type" value="protein"/>
</dbReference>
<dbReference type="Bgee" id="ENSG00000213853">
    <property type="expression patterns" value="Expressed in upper leg skin and 187 other cell types or tissues"/>
</dbReference>
<dbReference type="GO" id="GO:0045177">
    <property type="term" value="C:apical part of cell"/>
    <property type="evidence" value="ECO:0000250"/>
    <property type="project" value="UniProtKB"/>
</dbReference>
<dbReference type="GO" id="GO:0016324">
    <property type="term" value="C:apical plasma membrane"/>
    <property type="evidence" value="ECO:0000250"/>
    <property type="project" value="UniProtKB"/>
</dbReference>
<dbReference type="GO" id="GO:0009986">
    <property type="term" value="C:cell surface"/>
    <property type="evidence" value="ECO:0000250"/>
    <property type="project" value="UniProtKB"/>
</dbReference>
<dbReference type="GO" id="GO:0005737">
    <property type="term" value="C:cytoplasm"/>
    <property type="evidence" value="ECO:0000318"/>
    <property type="project" value="GO_Central"/>
</dbReference>
<dbReference type="GO" id="GO:0031410">
    <property type="term" value="C:cytoplasmic vesicle"/>
    <property type="evidence" value="ECO:0007669"/>
    <property type="project" value="Ensembl"/>
</dbReference>
<dbReference type="GO" id="GO:0005794">
    <property type="term" value="C:Golgi apparatus"/>
    <property type="evidence" value="ECO:0000314"/>
    <property type="project" value="UniProtKB"/>
</dbReference>
<dbReference type="GO" id="GO:0000139">
    <property type="term" value="C:Golgi membrane"/>
    <property type="evidence" value="ECO:0007669"/>
    <property type="project" value="UniProtKB-SubCell"/>
</dbReference>
<dbReference type="GO" id="GO:0016020">
    <property type="term" value="C:membrane"/>
    <property type="evidence" value="ECO:0000304"/>
    <property type="project" value="ProtInc"/>
</dbReference>
<dbReference type="GO" id="GO:0045121">
    <property type="term" value="C:membrane raft"/>
    <property type="evidence" value="ECO:0007669"/>
    <property type="project" value="UniProtKB-SubCell"/>
</dbReference>
<dbReference type="GO" id="GO:0005634">
    <property type="term" value="C:nucleus"/>
    <property type="evidence" value="ECO:0000250"/>
    <property type="project" value="UniProtKB"/>
</dbReference>
<dbReference type="GO" id="GO:0048471">
    <property type="term" value="C:perinuclear region of cytoplasm"/>
    <property type="evidence" value="ECO:0007669"/>
    <property type="project" value="UniProtKB-SubCell"/>
</dbReference>
<dbReference type="GO" id="GO:0005886">
    <property type="term" value="C:plasma membrane"/>
    <property type="evidence" value="ECO:0000314"/>
    <property type="project" value="UniProtKB"/>
</dbReference>
<dbReference type="GO" id="GO:0005178">
    <property type="term" value="F:integrin binding"/>
    <property type="evidence" value="ECO:0000353"/>
    <property type="project" value="MGI"/>
</dbReference>
<dbReference type="GO" id="GO:0019900">
    <property type="term" value="F:kinase binding"/>
    <property type="evidence" value="ECO:0000353"/>
    <property type="project" value="UniProtKB"/>
</dbReference>
<dbReference type="GO" id="GO:0007015">
    <property type="term" value="P:actin filament organization"/>
    <property type="evidence" value="ECO:0000314"/>
    <property type="project" value="UniProtKB"/>
</dbReference>
<dbReference type="GO" id="GO:0070252">
    <property type="term" value="P:actin-mediated cell contraction"/>
    <property type="evidence" value="ECO:0000314"/>
    <property type="project" value="UniProtKB"/>
</dbReference>
<dbReference type="GO" id="GO:0006915">
    <property type="term" value="P:apoptotic process"/>
    <property type="evidence" value="ECO:0000314"/>
    <property type="project" value="UniProtKB"/>
</dbReference>
<dbReference type="GO" id="GO:0032060">
    <property type="term" value="P:bleb assembly"/>
    <property type="evidence" value="ECO:0000314"/>
    <property type="project" value="UniProtKB"/>
</dbReference>
<dbReference type="GO" id="GO:0043534">
    <property type="term" value="P:blood vessel endothelial cell migration"/>
    <property type="evidence" value="ECO:0000314"/>
    <property type="project" value="UniProtKB"/>
</dbReference>
<dbReference type="GO" id="GO:0007155">
    <property type="term" value="P:cell adhesion"/>
    <property type="evidence" value="ECO:0000314"/>
    <property type="project" value="UniProtKB"/>
</dbReference>
<dbReference type="GO" id="GO:0007160">
    <property type="term" value="P:cell-matrix adhesion"/>
    <property type="evidence" value="ECO:0000314"/>
    <property type="project" value="UniProtKB"/>
</dbReference>
<dbReference type="GO" id="GO:0045022">
    <property type="term" value="P:early endosome to late endosome transport"/>
    <property type="evidence" value="ECO:0000250"/>
    <property type="project" value="UniProtKB"/>
</dbReference>
<dbReference type="GO" id="GO:0007566">
    <property type="term" value="P:embryo implantation"/>
    <property type="evidence" value="ECO:0000315"/>
    <property type="project" value="UniProtKB"/>
</dbReference>
<dbReference type="GO" id="GO:0060136">
    <property type="term" value="P:embryonic process involved in female pregnancy"/>
    <property type="evidence" value="ECO:0000250"/>
    <property type="project" value="UniProtKB"/>
</dbReference>
<dbReference type="GO" id="GO:0060914">
    <property type="term" value="P:heart formation"/>
    <property type="evidence" value="ECO:0000250"/>
    <property type="project" value="UniProtKB"/>
</dbReference>
<dbReference type="GO" id="GO:0001765">
    <property type="term" value="P:membrane raft assembly"/>
    <property type="evidence" value="ECO:0000250"/>
    <property type="project" value="UniProtKB"/>
</dbReference>
<dbReference type="GO" id="GO:0001787">
    <property type="term" value="P:natural killer cell proliferation"/>
    <property type="evidence" value="ECO:0000250"/>
    <property type="project" value="UniProtKB"/>
</dbReference>
<dbReference type="GO" id="GO:1990266">
    <property type="term" value="P:neutrophil migration"/>
    <property type="evidence" value="ECO:0000250"/>
    <property type="project" value="UniProtKB"/>
</dbReference>
<dbReference type="GO" id="GO:0044854">
    <property type="term" value="P:plasma membrane raft assembly"/>
    <property type="evidence" value="ECO:0000250"/>
    <property type="project" value="UniProtKB"/>
</dbReference>
<dbReference type="GO" id="GO:0045766">
    <property type="term" value="P:positive regulation of angiogenesis"/>
    <property type="evidence" value="ECO:0000250"/>
    <property type="project" value="UniProtKB"/>
</dbReference>
<dbReference type="GO" id="GO:0062043">
    <property type="term" value="P:positive regulation of cardiac epithelial to mesenchymal transition"/>
    <property type="evidence" value="ECO:0000250"/>
    <property type="project" value="UniProtKB"/>
</dbReference>
<dbReference type="GO" id="GO:0008284">
    <property type="term" value="P:positive regulation of cell population proliferation"/>
    <property type="evidence" value="ECO:0000315"/>
    <property type="project" value="UniProtKB"/>
</dbReference>
<dbReference type="GO" id="GO:0001954">
    <property type="term" value="P:positive regulation of cell-matrix adhesion"/>
    <property type="evidence" value="ECO:0000314"/>
    <property type="project" value="MGI"/>
</dbReference>
<dbReference type="GO" id="GO:2001046">
    <property type="term" value="P:positive regulation of integrin-mediated signaling pathway"/>
    <property type="evidence" value="ECO:0000314"/>
    <property type="project" value="MGI"/>
</dbReference>
<dbReference type="GO" id="GO:0034394">
    <property type="term" value="P:protein localization to cell surface"/>
    <property type="evidence" value="ECO:0000315"/>
    <property type="project" value="UniProtKB"/>
</dbReference>
<dbReference type="GO" id="GO:0072659">
    <property type="term" value="P:protein localization to plasma membrane"/>
    <property type="evidence" value="ECO:0000250"/>
    <property type="project" value="UniProtKB"/>
</dbReference>
<dbReference type="GO" id="GO:0045765">
    <property type="term" value="P:regulation of angiogenesis"/>
    <property type="evidence" value="ECO:0000314"/>
    <property type="project" value="UniProtKB"/>
</dbReference>
<dbReference type="GO" id="GO:0001952">
    <property type="term" value="P:regulation of cell-matrix adhesion"/>
    <property type="evidence" value="ECO:0000318"/>
    <property type="project" value="GO_Central"/>
</dbReference>
<dbReference type="GO" id="GO:0010594">
    <property type="term" value="P:regulation of endothelial cell migration"/>
    <property type="evidence" value="ECO:0000314"/>
    <property type="project" value="UniProtKB"/>
</dbReference>
<dbReference type="GO" id="GO:0003093">
    <property type="term" value="P:regulation of glomerular filtration"/>
    <property type="evidence" value="ECO:0000314"/>
    <property type="project" value="UniProtKB"/>
</dbReference>
<dbReference type="GO" id="GO:0043549">
    <property type="term" value="P:regulation of kinase activity"/>
    <property type="evidence" value="ECO:0000314"/>
    <property type="project" value="UniProtKB"/>
</dbReference>
<dbReference type="GO" id="GO:2001212">
    <property type="term" value="P:regulation of vasculogenesis"/>
    <property type="evidence" value="ECO:0000314"/>
    <property type="project" value="UniProtKB"/>
</dbReference>
<dbReference type="GO" id="GO:0001913">
    <property type="term" value="P:T cell mediated cytotoxicity"/>
    <property type="evidence" value="ECO:0000250"/>
    <property type="project" value="UniProtKB"/>
</dbReference>
<dbReference type="FunFam" id="1.20.140.150:FF:000023">
    <property type="entry name" value="Epithelial membrane protein 2"/>
    <property type="match status" value="1"/>
</dbReference>
<dbReference type="Gene3D" id="1.20.140.150">
    <property type="match status" value="1"/>
</dbReference>
<dbReference type="InterPro" id="IPR003933">
    <property type="entry name" value="EMP-2"/>
</dbReference>
<dbReference type="InterPro" id="IPR050579">
    <property type="entry name" value="PMP-22/EMP/MP20-like"/>
</dbReference>
<dbReference type="InterPro" id="IPR004031">
    <property type="entry name" value="PMP22/EMP/MP20/Claudin"/>
</dbReference>
<dbReference type="InterPro" id="IPR004032">
    <property type="entry name" value="PMP22_EMP_MP20"/>
</dbReference>
<dbReference type="PANTHER" id="PTHR10671:SF32">
    <property type="entry name" value="EPITHELIAL MEMBRANE PROTEIN 2"/>
    <property type="match status" value="1"/>
</dbReference>
<dbReference type="PANTHER" id="PTHR10671">
    <property type="entry name" value="EPITHELIAL MEMBRANE PROTEIN-RELATED"/>
    <property type="match status" value="1"/>
</dbReference>
<dbReference type="Pfam" id="PF00822">
    <property type="entry name" value="PMP22_Claudin"/>
    <property type="match status" value="1"/>
</dbReference>
<dbReference type="PRINTS" id="PR01453">
    <property type="entry name" value="EPMEMFAMILY"/>
</dbReference>
<dbReference type="PRINTS" id="PR01455">
    <property type="entry name" value="EPMEMPROT2"/>
</dbReference>
<dbReference type="PROSITE" id="PS01221">
    <property type="entry name" value="PMP22_1"/>
    <property type="match status" value="1"/>
</dbReference>
<dbReference type="PROSITE" id="PS01222">
    <property type="entry name" value="PMP22_2"/>
    <property type="match status" value="1"/>
</dbReference>
<protein>
    <recommendedName>
        <fullName>Epithelial membrane protein 2</fullName>
        <shortName>EMP-2</shortName>
    </recommendedName>
    <alternativeName>
        <fullName>Protein XMP</fullName>
    </alternativeName>
</protein>
<comment type="function">
    <text evidence="1 2 5 7 8 10 11 12 13 14 15">Functions as a key regulator of cell membrane composition by regulating protein surface expression. Also, plays a role in regulation of processes including cell migration, cell proliferation, cell contraction and cell adhesion. Regulates transepithelial migration of neutrophils into the alveolar lumen, potentially via mediation of cell surface expression of adhesion markers and lipid raft formation (By similarity). Negatively regulates caveolae formation by reducing CAV1 expression and CAV1 amount by increasing lysosomal degradation (PubMed:24814193). Facilitates surface trafficking and formation of lipid rafts bearing GPI-anchor proteins (By similarity). Regulates surface expression of MHC1 and ICAM1 proteins increasing susceptibility to T-cell mediated cytotoxicity (By similarity). Regulates the plasma membrane expression of the integrin heterodimers ITGA6-ITGB1, ITGA5-ITGB3 and ITGA5-ITGB1 resulting in modulation of cell-matrix adhesion (PubMed:16216233). Also regulates many processes through PTK2. Regulates blood vessel endothelial cell migration and angiogenesis by regulating VEGF protein expression through PTK2 activation (PubMed:23439602). Regulates cell migration and cell contraction through PTK2 and SRC activation (PubMed:21637765, PubMed:22728127). Regulates focal adhesion density, F-actin conformation and cell adhesion capacity through interaction with PTK2 (PubMed:19494199). Positively regulates cell proliferation (PubMed:24814193). Plays a role during cell death and cell blebbing (PubMed:12107182). Promotes angiogenesis and vasculogenesis through induction of VEGFA via a HIF1A-dependent pathway (PubMed:23334331). Also plays a role in embryo implantation by regulating surface trafficking of integrin heterodimer ITGA5-ITGB3 (PubMed:16487956). Plays a role in placental angiogenesis and uterine natural killer cell regulation at the maternal-fetal placental interface, however not required in the maternal tissues for a viable pregnancy (By similarity). Involved in the early stages of embryogenic development and cardiogenesis, potentially via regulation of epithelial-mesenchymal transition timing (By similarity). May play a role in glomerular filtration (By similarity).</text>
</comment>
<comment type="subunit">
    <text evidence="2 5 7 10 11">Interacts with PTK2; regulates PTK2 activation and localization (PubMed:19494199, PubMed:21637765). Interacts with ITGB3; regulates the levels of the heterodimer ITGA5-ITGB3 integrin surface expression (PubMed:16216233). Interacts with P2RX7 (via C-terminus) (PubMed:12107182). Interacts with ITGB1; the interaction may be direct or indirect and ITGB1 has a heterodimer form.</text>
</comment>
<comment type="subcellular location">
    <subcellularLocation>
        <location evidence="9">Golgi apparatus membrane</location>
        <topology evidence="4">Multi-pass membrane protein</topology>
    </subcellularLocation>
    <subcellularLocation>
        <location evidence="5 9 11 16">Cell membrane</location>
    </subcellularLocation>
    <subcellularLocation>
        <location evidence="2">Apical cell membrane</location>
    </subcellularLocation>
    <subcellularLocation>
        <location evidence="11">Membrane raft</location>
    </subcellularLocation>
    <subcellularLocation>
        <location evidence="11">Cytoplasm</location>
    </subcellularLocation>
    <subcellularLocation>
        <location evidence="3">Nucleus</location>
    </subcellularLocation>
    <subcellularLocation>
        <location evidence="2">Cytoplasm</location>
        <location evidence="2">Perinuclear region</location>
    </subcellularLocation>
    <text evidence="2 3">Localizes in cytoplasm, foot processes and cell bodies of podocytes and nucleus of endothelial cells of kidney. Localizes to the apical cell surface in the luminal epithelium and glandular epithelium. Colocalized with ITGB1 and GPI-anchor proteins on plasma membrane.</text>
</comment>
<comment type="tissue specificity">
    <text evidence="6 16">Expressed in ciliary body epithelia, sclera, cornea, and retinal pigment epithelium (at protein level) (PubMed:12710941). Expressed in lung and endometrial tissue; expression is particularly abundant in secretory endometrium (at protein level) (PubMed:12710941). Expressed in placental villous syncytiotrophoblasts and cytotrophoblasts and on the membrane of interstitial trophoblasts (at protein level) (PubMed:28295343).</text>
</comment>
<comment type="disease" evidence="15">
    <disease id="DI-04133">
        <name>Nephrotic syndrome 10</name>
        <acronym>NPHS10</acronym>
        <description>A form of nephrotic syndrome, a renal disease clinically characterized by focal segmental glomerulosclerosis, progressive renal failure, severe proteinuria, hypoalbuminemia, hyperlipidemia and edema. NPHS10 is a steroid-sensitive form characterized by onset in childhood and remission without end-stage kidney disease.</description>
        <dbReference type="MIM" id="615861"/>
    </disease>
    <text>The disease is caused by variants affecting the gene represented in this entry.</text>
</comment>
<comment type="similarity">
    <text evidence="17">Belongs to the PMP-22/EMP/MP20 family.</text>
</comment>
<name>EMP2_HUMAN</name>
<organism>
    <name type="scientific">Homo sapiens</name>
    <name type="common">Human</name>
    <dbReference type="NCBI Taxonomy" id="9606"/>
    <lineage>
        <taxon>Eukaryota</taxon>
        <taxon>Metazoa</taxon>
        <taxon>Chordata</taxon>
        <taxon>Craniata</taxon>
        <taxon>Vertebrata</taxon>
        <taxon>Euteleostomi</taxon>
        <taxon>Mammalia</taxon>
        <taxon>Eutheria</taxon>
        <taxon>Euarchontoglires</taxon>
        <taxon>Primates</taxon>
        <taxon>Haplorrhini</taxon>
        <taxon>Catarrhini</taxon>
        <taxon>Hominidae</taxon>
        <taxon>Homo</taxon>
    </lineage>
</organism>
<sequence>MLVLLAFIIAFHITSAALLFIATVDNAWWVGDEFFADVWRICTNNTNCTVINDSFQEYSTLQAVQATMILSTILCCIAFFIFVLQLFRLKQGERFVLTSIIQLMSCLCVMIAASIYTDRREDIHDKNAKFYPVTREGSYGYSYILAWVAFACTFISGMMYLILRKRK</sequence>
<feature type="chain" id="PRO_0000164658" description="Epithelial membrane protein 2">
    <location>
        <begin position="1"/>
        <end position="167"/>
    </location>
</feature>
<feature type="transmembrane region" description="Helical" evidence="4">
    <location>
        <begin position="1"/>
        <end position="21"/>
    </location>
</feature>
<feature type="transmembrane region" description="Helical" evidence="4">
    <location>
        <begin position="67"/>
        <end position="87"/>
    </location>
</feature>
<feature type="transmembrane region" description="Helical" evidence="4">
    <location>
        <begin position="95"/>
        <end position="115"/>
    </location>
</feature>
<feature type="transmembrane region" description="Helical" evidence="4">
    <location>
        <begin position="143"/>
        <end position="163"/>
    </location>
</feature>
<feature type="glycosylation site" description="N-linked (GlcNAc...) asparagine" evidence="4">
    <location>
        <position position="44"/>
    </location>
</feature>
<feature type="glycosylation site" description="N-linked (GlcNAc...) asparagine" evidence="4">
    <location>
        <position position="47"/>
    </location>
</feature>
<feature type="glycosylation site" description="N-linked (GlcNAc...) asparagine" evidence="4">
    <location>
        <position position="52"/>
    </location>
</feature>
<feature type="sequence variant" id="VAR_071478" description="In NPHS10; decreased amount of CAV1; dbSNP:rs730882194." evidence="15">
    <original>F</original>
    <variation>L</variation>
    <location>
        <position position="7"/>
    </location>
</feature>
<feature type="sequence variant" id="VAR_071479" description="In NPHS10; decreased amount of CAV1; dbSNP:rs587777482." evidence="15">
    <original>A</original>
    <variation>T</variation>
    <location>
        <position position="10"/>
    </location>
</feature>
<feature type="sequence conflict" description="In Ref. 3; CAA64393." evidence="17" ref="3">
    <original>F</original>
    <variation>L</variation>
    <location>
        <position position="20"/>
    </location>
</feature>
<feature type="sequence conflict" description="In Ref. 3; CAA64393." evidence="17" ref="3">
    <original>V</original>
    <variation>F</variation>
    <location>
        <position position="64"/>
    </location>
</feature>
<evidence type="ECO:0000250" key="1">
    <source>
        <dbReference type="UniProtKB" id="F1QIK8"/>
    </source>
</evidence>
<evidence type="ECO:0000250" key="2">
    <source>
        <dbReference type="UniProtKB" id="O88662"/>
    </source>
</evidence>
<evidence type="ECO:0000250" key="3">
    <source>
        <dbReference type="UniProtKB" id="Q66HH2"/>
    </source>
</evidence>
<evidence type="ECO:0000255" key="4"/>
<evidence type="ECO:0000269" key="5">
    <source>
    </source>
</evidence>
<evidence type="ECO:0000269" key="6">
    <source>
    </source>
</evidence>
<evidence type="ECO:0000269" key="7">
    <source>
    </source>
</evidence>
<evidence type="ECO:0000269" key="8">
    <source>
    </source>
</evidence>
<evidence type="ECO:0000269" key="9">
    <source>
    </source>
</evidence>
<evidence type="ECO:0000269" key="10">
    <source>
    </source>
</evidence>
<evidence type="ECO:0000269" key="11">
    <source>
    </source>
</evidence>
<evidence type="ECO:0000269" key="12">
    <source>
    </source>
</evidence>
<evidence type="ECO:0000269" key="13">
    <source>
    </source>
</evidence>
<evidence type="ECO:0000269" key="14">
    <source>
    </source>
</evidence>
<evidence type="ECO:0000269" key="15">
    <source>
    </source>
</evidence>
<evidence type="ECO:0000269" key="16">
    <source>
    </source>
</evidence>
<evidence type="ECO:0000305" key="17"/>
<accession>P54851</accession>
<accession>B2R7V6</accession>
<accession>D3DUF8</accession>
<reference key="1">
    <citation type="journal article" date="1996" name="Gene">
        <title>Epithelial membrane protein-2 and epithelial membrane protein-3: two novel members of the peripheral myelin protein 22 gene family.</title>
        <authorList>
            <person name="Taylor V."/>
            <person name="Suter U."/>
        </authorList>
    </citation>
    <scope>NUCLEOTIDE SEQUENCE [MRNA]</scope>
    <source>
        <tissue>Spleen</tissue>
    </source>
</reference>
<reference key="2">
    <citation type="journal article" date="1996" name="Gene">
        <title>Characterization of a tumor-associated gene, a member of a novel family of genes encoding membrane glycoproteins.</title>
        <authorList>
            <person name="Ben-Porath I."/>
            <person name="Benvenisty N."/>
        </authorList>
    </citation>
    <scope>NUCLEOTIDE SEQUENCE [MRNA]</scope>
</reference>
<reference key="3">
    <citation type="submission" date="1997-10" db="EMBL/GenBank/DDBJ databases">
        <authorList>
            <person name="Ben-Porath I."/>
            <person name="Benvenisty N."/>
        </authorList>
    </citation>
    <scope>SEQUENCE REVISION</scope>
</reference>
<reference key="4">
    <citation type="submission" date="2001-09" db="EMBL/GenBank/DDBJ databases">
        <title>Genomic structure of the human epithelial membrane protein 2 (EMP2) gene; regulation by two alternative promoters.</title>
        <authorList>
            <person name="Kim Y.-S."/>
            <person name="Ueda E."/>
            <person name="Borok Z."/>
            <person name="Kim S.-Y."/>
            <person name="Jetten A.M."/>
        </authorList>
    </citation>
    <scope>NUCLEOTIDE SEQUENCE [GENOMIC DNA]</scope>
</reference>
<reference key="5">
    <citation type="journal article" date="2004" name="Nat. Genet.">
        <title>Complete sequencing and characterization of 21,243 full-length human cDNAs.</title>
        <authorList>
            <person name="Ota T."/>
            <person name="Suzuki Y."/>
            <person name="Nishikawa T."/>
            <person name="Otsuki T."/>
            <person name="Sugiyama T."/>
            <person name="Irie R."/>
            <person name="Wakamatsu A."/>
            <person name="Hayashi K."/>
            <person name="Sato H."/>
            <person name="Nagai K."/>
            <person name="Kimura K."/>
            <person name="Makita H."/>
            <person name="Sekine M."/>
            <person name="Obayashi M."/>
            <person name="Nishi T."/>
            <person name="Shibahara T."/>
            <person name="Tanaka T."/>
            <person name="Ishii S."/>
            <person name="Yamamoto J."/>
            <person name="Saito K."/>
            <person name="Kawai Y."/>
            <person name="Isono Y."/>
            <person name="Nakamura Y."/>
            <person name="Nagahari K."/>
            <person name="Murakami K."/>
            <person name="Yasuda T."/>
            <person name="Iwayanagi T."/>
            <person name="Wagatsuma M."/>
            <person name="Shiratori A."/>
            <person name="Sudo H."/>
            <person name="Hosoiri T."/>
            <person name="Kaku Y."/>
            <person name="Kodaira H."/>
            <person name="Kondo H."/>
            <person name="Sugawara M."/>
            <person name="Takahashi M."/>
            <person name="Kanda K."/>
            <person name="Yokoi T."/>
            <person name="Furuya T."/>
            <person name="Kikkawa E."/>
            <person name="Omura Y."/>
            <person name="Abe K."/>
            <person name="Kamihara K."/>
            <person name="Katsuta N."/>
            <person name="Sato K."/>
            <person name="Tanikawa M."/>
            <person name="Yamazaki M."/>
            <person name="Ninomiya K."/>
            <person name="Ishibashi T."/>
            <person name="Yamashita H."/>
            <person name="Murakawa K."/>
            <person name="Fujimori K."/>
            <person name="Tanai H."/>
            <person name="Kimata M."/>
            <person name="Watanabe M."/>
            <person name="Hiraoka S."/>
            <person name="Chiba Y."/>
            <person name="Ishida S."/>
            <person name="Ono Y."/>
            <person name="Takiguchi S."/>
            <person name="Watanabe S."/>
            <person name="Yosida M."/>
            <person name="Hotuta T."/>
            <person name="Kusano J."/>
            <person name="Kanehori K."/>
            <person name="Takahashi-Fujii A."/>
            <person name="Hara H."/>
            <person name="Tanase T.-O."/>
            <person name="Nomura Y."/>
            <person name="Togiya S."/>
            <person name="Komai F."/>
            <person name="Hara R."/>
            <person name="Takeuchi K."/>
            <person name="Arita M."/>
            <person name="Imose N."/>
            <person name="Musashino K."/>
            <person name="Yuuki H."/>
            <person name="Oshima A."/>
            <person name="Sasaki N."/>
            <person name="Aotsuka S."/>
            <person name="Yoshikawa Y."/>
            <person name="Matsunawa H."/>
            <person name="Ichihara T."/>
            <person name="Shiohata N."/>
            <person name="Sano S."/>
            <person name="Moriya S."/>
            <person name="Momiyama H."/>
            <person name="Satoh N."/>
            <person name="Takami S."/>
            <person name="Terashima Y."/>
            <person name="Suzuki O."/>
            <person name="Nakagawa S."/>
            <person name="Senoh A."/>
            <person name="Mizoguchi H."/>
            <person name="Goto Y."/>
            <person name="Shimizu F."/>
            <person name="Wakebe H."/>
            <person name="Hishigaki H."/>
            <person name="Watanabe T."/>
            <person name="Sugiyama A."/>
            <person name="Takemoto M."/>
            <person name="Kawakami B."/>
            <person name="Yamazaki M."/>
            <person name="Watanabe K."/>
            <person name="Kumagai A."/>
            <person name="Itakura S."/>
            <person name="Fukuzumi Y."/>
            <person name="Fujimori Y."/>
            <person name="Komiyama M."/>
            <person name="Tashiro H."/>
            <person name="Tanigami A."/>
            <person name="Fujiwara T."/>
            <person name="Ono T."/>
            <person name="Yamada K."/>
            <person name="Fujii Y."/>
            <person name="Ozaki K."/>
            <person name="Hirao M."/>
            <person name="Ohmori Y."/>
            <person name="Kawabata A."/>
            <person name="Hikiji T."/>
            <person name="Kobatake N."/>
            <person name="Inagaki H."/>
            <person name="Ikema Y."/>
            <person name="Okamoto S."/>
            <person name="Okitani R."/>
            <person name="Kawakami T."/>
            <person name="Noguchi S."/>
            <person name="Itoh T."/>
            <person name="Shigeta K."/>
            <person name="Senba T."/>
            <person name="Matsumura K."/>
            <person name="Nakajima Y."/>
            <person name="Mizuno T."/>
            <person name="Morinaga M."/>
            <person name="Sasaki M."/>
            <person name="Togashi T."/>
            <person name="Oyama M."/>
            <person name="Hata H."/>
            <person name="Watanabe M."/>
            <person name="Komatsu T."/>
            <person name="Mizushima-Sugano J."/>
            <person name="Satoh T."/>
            <person name="Shirai Y."/>
            <person name="Takahashi Y."/>
            <person name="Nakagawa K."/>
            <person name="Okumura K."/>
            <person name="Nagase T."/>
            <person name="Nomura N."/>
            <person name="Kikuchi H."/>
            <person name="Masuho Y."/>
            <person name="Yamashita R."/>
            <person name="Nakai K."/>
            <person name="Yada T."/>
            <person name="Nakamura Y."/>
            <person name="Ohara O."/>
            <person name="Isogai T."/>
            <person name="Sugano S."/>
        </authorList>
    </citation>
    <scope>NUCLEOTIDE SEQUENCE [LARGE SCALE MRNA]</scope>
    <source>
        <tissue>Tongue</tissue>
    </source>
</reference>
<reference key="6">
    <citation type="submission" date="2005-09" db="EMBL/GenBank/DDBJ databases">
        <authorList>
            <person name="Mural R.J."/>
            <person name="Istrail S."/>
            <person name="Sutton G.G."/>
            <person name="Florea L."/>
            <person name="Halpern A.L."/>
            <person name="Mobarry C.M."/>
            <person name="Lippert R."/>
            <person name="Walenz B."/>
            <person name="Shatkay H."/>
            <person name="Dew I."/>
            <person name="Miller J.R."/>
            <person name="Flanigan M.J."/>
            <person name="Edwards N.J."/>
            <person name="Bolanos R."/>
            <person name="Fasulo D."/>
            <person name="Halldorsson B.V."/>
            <person name="Hannenhalli S."/>
            <person name="Turner R."/>
            <person name="Yooseph S."/>
            <person name="Lu F."/>
            <person name="Nusskern D.R."/>
            <person name="Shue B.C."/>
            <person name="Zheng X.H."/>
            <person name="Zhong F."/>
            <person name="Delcher A.L."/>
            <person name="Huson D.H."/>
            <person name="Kravitz S.A."/>
            <person name="Mouchard L."/>
            <person name="Reinert K."/>
            <person name="Remington K.A."/>
            <person name="Clark A.G."/>
            <person name="Waterman M.S."/>
            <person name="Eichler E.E."/>
            <person name="Adams M.D."/>
            <person name="Hunkapiller M.W."/>
            <person name="Myers E.W."/>
            <person name="Venter J.C."/>
        </authorList>
    </citation>
    <scope>NUCLEOTIDE SEQUENCE [LARGE SCALE GENOMIC DNA]</scope>
</reference>
<reference key="7">
    <citation type="journal article" date="2004" name="Genome Res.">
        <title>The status, quality, and expansion of the NIH full-length cDNA project: the Mammalian Gene Collection (MGC).</title>
        <authorList>
            <consortium name="The MGC Project Team"/>
        </authorList>
    </citation>
    <scope>NUCLEOTIDE SEQUENCE [LARGE SCALE MRNA]</scope>
    <source>
        <tissue>Lung</tissue>
    </source>
</reference>
<reference key="8">
    <citation type="journal article" date="2002" name="J. Biol. Chem.">
        <title>Epithelial membrane proteins induce membrane blebbing and interact with the P2X7 receptor C terminus.</title>
        <authorList>
            <person name="Wilson H.L."/>
            <person name="Wilson S.A."/>
            <person name="Surprenant A."/>
            <person name="North R.A."/>
        </authorList>
    </citation>
    <scope>FUNCTION</scope>
    <scope>INTERACTION WITH P2RX7</scope>
    <scope>SUBCELLULAR LOCATION</scope>
</reference>
<reference key="9">
    <citation type="journal article" date="2003" name="Exp. Mol. Pathol.">
        <title>Epithelial membrane protein-2 is expressed in discrete anatomical regions of the eye.</title>
        <authorList>
            <person name="Wadehra M."/>
            <person name="Sulur G.G."/>
            <person name="Braun J."/>
            <person name="Gordon L.K."/>
            <person name="Goodglick L."/>
        </authorList>
    </citation>
    <scope>TISSUE SPECIFICITY</scope>
</reference>
<reference key="10">
    <citation type="journal article" date="2005" name="Dev. Biol.">
        <title>Epithelial membrane protein-2 regulates surface expression of alphavbeta3 integrin in the endometrium.</title>
        <authorList>
            <person name="Wadehra M."/>
            <person name="Forbes A."/>
            <person name="Pushkarna N."/>
            <person name="Goodglick L."/>
            <person name="Gordon L.K."/>
            <person name="Williams C.J."/>
            <person name="Braun J."/>
        </authorList>
    </citation>
    <scope>FUNCTION</scope>
    <scope>INTERACTION WITH ITGB3</scope>
</reference>
<reference key="11">
    <citation type="journal article" date="2006" name="Dev. Biol.">
        <title>Knockdown of the tetraspan protein epithelial membrane protein-2 inhibits implantation in the mouse.</title>
        <authorList>
            <person name="Wadehra M."/>
            <person name="Dayal M."/>
            <person name="Mainigi M."/>
            <person name="Ord T."/>
            <person name="Iyer R."/>
            <person name="Braun J."/>
            <person name="Williams C.J."/>
        </authorList>
    </citation>
    <scope>FUNCTION</scope>
</reference>
<reference key="12">
    <citation type="journal article" date="2008" name="Reprod. Biol. Endocrinol.">
        <title>Steroid hormone regulation of EMP2 expression and localization in the endometrium.</title>
        <authorList>
            <person name="Wadehra M."/>
            <person name="Mainigi M."/>
            <person name="Morales S.A."/>
            <person name="Rao R.G."/>
            <person name="Gordon L.K."/>
            <person name="Williams C.J."/>
            <person name="Braun J."/>
        </authorList>
    </citation>
    <scope>SUBCELLULAR LOCATION</scope>
    <scope>TISSUE SPECIFICITY</scope>
</reference>
<reference key="13">
    <citation type="journal article" date="2009" name="Invest. Ophthalmol. Vis. Sci.">
        <title>Functional consequences of interactions between FAK and epithelial membrane protein 2 (EMP2).</title>
        <authorList>
            <person name="Morales S.A."/>
            <person name="Mareninov S."/>
            <person name="Coulam P."/>
            <person name="Wadehra M."/>
            <person name="Goodglick L."/>
            <person name="Braun J."/>
            <person name="Gordon L.K."/>
        </authorList>
    </citation>
    <scope>INTERACTION WITH PTK2</scope>
    <scope>FUNCTION</scope>
</reference>
<reference key="14">
    <citation type="journal article" date="2011" name="PLoS ONE">
        <title>Epithelial membrane protein-2 promotes endometrial tumor formation through activation of FAK and Src.</title>
        <authorList>
            <person name="Fu M."/>
            <person name="Rao R."/>
            <person name="Sudhakar D."/>
            <person name="Hogue C.P."/>
            <person name="Rutta Z."/>
            <person name="Morales S."/>
            <person name="Gordon L.K."/>
            <person name="Braun J."/>
            <person name="Goodglick L."/>
            <person name="Wadehra M."/>
        </authorList>
    </citation>
    <scope>FUNCTION</scope>
    <scope>INTERACTION WITH PTK2</scope>
    <scope>SUBCELLULAR LOCATION</scope>
</reference>
<reference key="15">
    <citation type="journal article" date="2012" name="Exp. Eye Res.">
        <title>Anti-EMP2 diabody blocks epithelial membrane protein 2 (EMP2) and FAK mediated collagen gel contraction in ARPE-19 cells.</title>
        <authorList>
            <person name="Morales S.A."/>
            <person name="Telander D.G."/>
            <person name="Mareninov S."/>
            <person name="Nagy A."/>
            <person name="Wadehra M."/>
            <person name="Braun J."/>
            <person name="Gordon L.K."/>
        </authorList>
    </citation>
    <scope>FUNCTION</scope>
</reference>
<reference key="16">
    <citation type="journal article" date="2013" name="Invest. Ophthalmol. Vis. Sci.">
        <title>Epithelial membrane protein 2 controls VEGF expression in ARPE-19 cells.</title>
        <authorList>
            <person name="Morales S.A."/>
            <person name="Telander D.G."/>
            <person name="Leon D."/>
            <person name="Forward K."/>
            <person name="Braun J."/>
            <person name="Wadehra M."/>
            <person name="Gordon L.K."/>
        </authorList>
    </citation>
    <scope>FUNCTION</scope>
</reference>
<reference key="17">
    <citation type="journal article" date="2013" name="Oncogene">
        <title>EMP2 regulates angiogenesis in endometrial cancer cells through induction of VEGF.</title>
        <authorList>
            <person name="Gordon L.K."/>
            <person name="Kiyohara M."/>
            <person name="Fu M."/>
            <person name="Braun J."/>
            <person name="Dhawan P."/>
            <person name="Chan A."/>
            <person name="Goodglick L."/>
            <person name="Wadehra M."/>
        </authorList>
    </citation>
    <scope>FUNCTION</scope>
</reference>
<reference key="18">
    <citation type="journal article" date="2014" name="Am. J. Hum. Genet.">
        <title>Mutations in EMP2 cause childhood-onset nephrotic syndrome.</title>
        <authorList>
            <person name="Gee H.Y."/>
            <person name="Ashraf S."/>
            <person name="Wan X."/>
            <person name="Vega-Warner V."/>
            <person name="Esteve-Rudd J."/>
            <person name="Lovric S."/>
            <person name="Fang H."/>
            <person name="Hurd T.W."/>
            <person name="Sadowski C.E."/>
            <person name="Allen S.J."/>
            <person name="Otto E.A."/>
            <person name="Korkmaz E."/>
            <person name="Washburn J."/>
            <person name="Levy S."/>
            <person name="Williams D.S."/>
            <person name="Bakkaloglu S.A."/>
            <person name="Zolotnitskaya A."/>
            <person name="Ozaltin F."/>
            <person name="Zhou W."/>
            <person name="Hildebrandt F."/>
        </authorList>
    </citation>
    <scope>FUNCTION</scope>
    <scope>INVOLVEMENT IN NPHS10</scope>
    <scope>VARIANTS NPHS10 LEU-7 AND THR-10</scope>
    <scope>CHARACTERIZATION OF VARIANTS NPHS10 LEU-7 AND THR-10</scope>
</reference>
<reference key="19">
    <citation type="journal article" date="2017" name="J. Pathol.">
        <title>Epithelial membrane protein 2 (EMP2) deficiency alters placental angiogenesis, mimicking features of human placental insufficiency.</title>
        <authorList>
            <person name="Williams C.J."/>
            <person name="Chu A."/>
            <person name="Jefferson W.N."/>
            <person name="Casero D."/>
            <person name="Sudhakar D."/>
            <person name="Khurana N."/>
            <person name="Hogue C.P."/>
            <person name="Aryasomayajula C."/>
            <person name="Patel P."/>
            <person name="Sullivan P."/>
            <person name="Padilla-Banks E."/>
            <person name="Mohandessi S."/>
            <person name="Janzen C."/>
            <person name="Wadehra M."/>
        </authorList>
    </citation>
    <scope>SUBCELLULAR LOCATION</scope>
    <scope>TISSUE SPECIFICITY</scope>
</reference>
<proteinExistence type="evidence at protein level"/>
<gene>
    <name type="primary">EMP2</name>
    <name type="synonym">XMP</name>
</gene>